<comment type="function">
    <text evidence="1">The beta subunit is responsible for the synthesis of L-tryptophan from indole and L-serine.</text>
</comment>
<comment type="catalytic activity">
    <reaction>
        <text>(1S,2R)-1-C-(indol-3-yl)glycerol 3-phosphate + L-serine = D-glyceraldehyde 3-phosphate + L-tryptophan + H2O</text>
        <dbReference type="Rhea" id="RHEA:10532"/>
        <dbReference type="ChEBI" id="CHEBI:15377"/>
        <dbReference type="ChEBI" id="CHEBI:33384"/>
        <dbReference type="ChEBI" id="CHEBI:57912"/>
        <dbReference type="ChEBI" id="CHEBI:58866"/>
        <dbReference type="ChEBI" id="CHEBI:59776"/>
        <dbReference type="EC" id="4.2.1.20"/>
    </reaction>
</comment>
<comment type="cofactor">
    <cofactor evidence="1">
        <name>pyridoxal 5'-phosphate</name>
        <dbReference type="ChEBI" id="CHEBI:597326"/>
    </cofactor>
</comment>
<comment type="pathway">
    <text>Amino-acid biosynthesis; L-tryptophan biosynthesis; L-tryptophan from chorismate: step 5/5.</text>
</comment>
<comment type="subunit">
    <text evidence="1">Tetramer of two alpha and two beta chains.</text>
</comment>
<comment type="similarity">
    <text evidence="3">Belongs to the TrpB family.</text>
</comment>
<keyword id="KW-0028">Amino-acid biosynthesis</keyword>
<keyword id="KW-0057">Aromatic amino acid biosynthesis</keyword>
<keyword id="KW-0456">Lyase</keyword>
<keyword id="KW-0663">Pyridoxal phosphate</keyword>
<keyword id="KW-1185">Reference proteome</keyword>
<keyword id="KW-0822">Tryptophan biosynthesis</keyword>
<protein>
    <recommendedName>
        <fullName>Tryptophan synthase beta chain 2</fullName>
        <ecNumber>4.2.1.20</ecNumber>
    </recommendedName>
</protein>
<sequence length="429" mass="47488">MMNKIVLDENEIPKKWYNINPDLPSPLPEPKNPEGGKNIENLPRVFSRGVLEQEMSMERWIKIPREVMDVYKMIGRPTPLFRAKGLEEMLDTPARIYYKREDYSPTGSHKLNTAIAQAYYARKDGAERLTTETGAGQWGTALSLACSLMDLQCKVYMVRVSFNQKPFRKTIMQLYGGEVVPSPSNHTEFGRRMLKEDPEHPGSLGIAISEAMEEALQEENVYYSLGSVLNHVLLHQTVIGLETKKQLEIAGETPDIMIGCVGGGSNFGGAIFPFVKDKLDGKLDCEFIAAEPKSCPTLTAGEYRYDFGDTAGMTPLLKMYTLGHDFVPPSVHAGGLRYHGMSPQVALLVREGVINARAVPQHTIFESGVKFAKAEGVVPAPETCHAISVAIDEARKCRETGEEKTIVISFSGHGLLDLKGYGDYLEGKI</sequence>
<accession>O27520</accession>
<reference key="1">
    <citation type="journal article" date="1997" name="J. Bacteriol.">
        <title>Complete genome sequence of Methanobacterium thermoautotrophicum deltaH: functional analysis and comparative genomics.</title>
        <authorList>
            <person name="Smith D.R."/>
            <person name="Doucette-Stamm L.A."/>
            <person name="Deloughery C."/>
            <person name="Lee H.-M."/>
            <person name="Dubois J."/>
            <person name="Aldredge T."/>
            <person name="Bashirzadeh R."/>
            <person name="Blakely D."/>
            <person name="Cook R."/>
            <person name="Gilbert K."/>
            <person name="Harrison D."/>
            <person name="Hoang L."/>
            <person name="Keagle P."/>
            <person name="Lumm W."/>
            <person name="Pothier B."/>
            <person name="Qiu D."/>
            <person name="Spadafora R."/>
            <person name="Vicare R."/>
            <person name="Wang Y."/>
            <person name="Wierzbowski J."/>
            <person name="Gibson R."/>
            <person name="Jiwani N."/>
            <person name="Caruso A."/>
            <person name="Bush D."/>
            <person name="Safer H."/>
            <person name="Patwell D."/>
            <person name="Prabhakar S."/>
            <person name="McDougall S."/>
            <person name="Shimer G."/>
            <person name="Goyal A."/>
            <person name="Pietrovski S."/>
            <person name="Church G.M."/>
            <person name="Daniels C.J."/>
            <person name="Mao J.-I."/>
            <person name="Rice P."/>
            <person name="Noelling J."/>
            <person name="Reeve J.N."/>
        </authorList>
    </citation>
    <scope>NUCLEOTIDE SEQUENCE [LARGE SCALE GENOMIC DNA]</scope>
    <source>
        <strain>ATCC 29096 / DSM 1053 / JCM 10044 / NBRC 100330 / Delta H</strain>
    </source>
</reference>
<proteinExistence type="inferred from homology"/>
<gene>
    <name type="primary">trpB2</name>
    <name type="ordered locus">MTH_1476</name>
</gene>
<feature type="chain" id="PRO_0000099043" description="Tryptophan synthase beta chain 2">
    <location>
        <begin position="1"/>
        <end position="429"/>
    </location>
</feature>
<feature type="region of interest" description="Disordered" evidence="2">
    <location>
        <begin position="18"/>
        <end position="40"/>
    </location>
</feature>
<feature type="modified residue" description="N6-(pyridoxal phosphate)lysine" evidence="1">
    <location>
        <position position="110"/>
    </location>
</feature>
<evidence type="ECO:0000250" key="1"/>
<evidence type="ECO:0000256" key="2">
    <source>
        <dbReference type="SAM" id="MobiDB-lite"/>
    </source>
</evidence>
<evidence type="ECO:0000305" key="3"/>
<name>TRPB2_METTH</name>
<organism>
    <name type="scientific">Methanothermobacter thermautotrophicus (strain ATCC 29096 / DSM 1053 / JCM 10044 / NBRC 100330 / Delta H)</name>
    <name type="common">Methanobacterium thermoautotrophicum</name>
    <dbReference type="NCBI Taxonomy" id="187420"/>
    <lineage>
        <taxon>Archaea</taxon>
        <taxon>Methanobacteriati</taxon>
        <taxon>Methanobacteriota</taxon>
        <taxon>Methanomada group</taxon>
        <taxon>Methanobacteria</taxon>
        <taxon>Methanobacteriales</taxon>
        <taxon>Methanobacteriaceae</taxon>
        <taxon>Methanothermobacter</taxon>
    </lineage>
</organism>
<dbReference type="EC" id="4.2.1.20"/>
<dbReference type="EMBL" id="AE000666">
    <property type="protein sequence ID" value="AAB85951.1"/>
    <property type="molecule type" value="Genomic_DNA"/>
</dbReference>
<dbReference type="PIR" id="F69063">
    <property type="entry name" value="F69063"/>
</dbReference>
<dbReference type="RefSeq" id="WP_010877086.1">
    <property type="nucleotide sequence ID" value="NC_000916.1"/>
</dbReference>
<dbReference type="SMR" id="O27520"/>
<dbReference type="STRING" id="187420.MTH_1476"/>
<dbReference type="PaxDb" id="187420-MTH_1476"/>
<dbReference type="EnsemblBacteria" id="AAB85951">
    <property type="protein sequence ID" value="AAB85951"/>
    <property type="gene ID" value="MTH_1476"/>
</dbReference>
<dbReference type="KEGG" id="mth:MTH_1476"/>
<dbReference type="PATRIC" id="fig|187420.15.peg.1438"/>
<dbReference type="HOGENOM" id="CLU_042858_1_0_2"/>
<dbReference type="InParanoid" id="O27520"/>
<dbReference type="UniPathway" id="UPA00035">
    <property type="reaction ID" value="UER00044"/>
</dbReference>
<dbReference type="Proteomes" id="UP000005223">
    <property type="component" value="Chromosome"/>
</dbReference>
<dbReference type="GO" id="GO:0005737">
    <property type="term" value="C:cytoplasm"/>
    <property type="evidence" value="ECO:0007669"/>
    <property type="project" value="TreeGrafter"/>
</dbReference>
<dbReference type="GO" id="GO:0052684">
    <property type="term" value="F:L-serine hydro-lyase (adding indole, L-tryptophan-forming) activity"/>
    <property type="evidence" value="ECO:0007669"/>
    <property type="project" value="TreeGrafter"/>
</dbReference>
<dbReference type="GO" id="GO:0030170">
    <property type="term" value="F:pyridoxal phosphate binding"/>
    <property type="evidence" value="ECO:0007669"/>
    <property type="project" value="InterPro"/>
</dbReference>
<dbReference type="GO" id="GO:0004834">
    <property type="term" value="F:tryptophan synthase activity"/>
    <property type="evidence" value="ECO:0007669"/>
    <property type="project" value="UniProtKB-UniRule"/>
</dbReference>
<dbReference type="CDD" id="cd06446">
    <property type="entry name" value="Trp-synth_B"/>
    <property type="match status" value="1"/>
</dbReference>
<dbReference type="Gene3D" id="3.40.50.1100">
    <property type="match status" value="2"/>
</dbReference>
<dbReference type="HAMAP" id="MF_00133">
    <property type="entry name" value="Trp_synth_beta"/>
    <property type="match status" value="1"/>
</dbReference>
<dbReference type="InterPro" id="IPR006316">
    <property type="entry name" value="Trp_synth_b-like"/>
</dbReference>
<dbReference type="InterPro" id="IPR006653">
    <property type="entry name" value="Trp_synth_b_CS"/>
</dbReference>
<dbReference type="InterPro" id="IPR006654">
    <property type="entry name" value="Trp_synth_beta"/>
</dbReference>
<dbReference type="InterPro" id="IPR023026">
    <property type="entry name" value="Trp_synth_beta/beta-like"/>
</dbReference>
<dbReference type="InterPro" id="IPR001926">
    <property type="entry name" value="TrpB-like_PALP"/>
</dbReference>
<dbReference type="InterPro" id="IPR036052">
    <property type="entry name" value="TrpB-like_PALP_sf"/>
</dbReference>
<dbReference type="NCBIfam" id="NF009057">
    <property type="entry name" value="PRK12391.1"/>
    <property type="match status" value="1"/>
</dbReference>
<dbReference type="NCBIfam" id="TIGR01415">
    <property type="entry name" value="trpB_rel"/>
    <property type="match status" value="1"/>
</dbReference>
<dbReference type="PANTHER" id="PTHR48077:SF6">
    <property type="entry name" value="TRYPTOPHAN SYNTHASE"/>
    <property type="match status" value="1"/>
</dbReference>
<dbReference type="PANTHER" id="PTHR48077">
    <property type="entry name" value="TRYPTOPHAN SYNTHASE-RELATED"/>
    <property type="match status" value="1"/>
</dbReference>
<dbReference type="Pfam" id="PF00291">
    <property type="entry name" value="PALP"/>
    <property type="match status" value="1"/>
</dbReference>
<dbReference type="PIRSF" id="PIRSF001413">
    <property type="entry name" value="Trp_syn_beta"/>
    <property type="match status" value="1"/>
</dbReference>
<dbReference type="PIRSF" id="PIRSF500824">
    <property type="entry name" value="TrpB_prok"/>
    <property type="match status" value="1"/>
</dbReference>
<dbReference type="SUPFAM" id="SSF53686">
    <property type="entry name" value="Tryptophan synthase beta subunit-like PLP-dependent enzymes"/>
    <property type="match status" value="1"/>
</dbReference>
<dbReference type="PROSITE" id="PS00168">
    <property type="entry name" value="TRP_SYNTHASE_BETA"/>
    <property type="match status" value="1"/>
</dbReference>